<feature type="chain" id="PRO_0000227476" description="UvrABC system protein C">
    <location>
        <begin position="1"/>
        <end position="593"/>
    </location>
</feature>
<feature type="domain" description="GIY-YIG" evidence="1">
    <location>
        <begin position="14"/>
        <end position="91"/>
    </location>
</feature>
<feature type="domain" description="UVR" evidence="1">
    <location>
        <begin position="196"/>
        <end position="231"/>
    </location>
</feature>
<name>UVRC_STRA1</name>
<organism>
    <name type="scientific">Streptococcus agalactiae serotype Ia (strain ATCC 27591 / A909 / CDC SS700)</name>
    <dbReference type="NCBI Taxonomy" id="205921"/>
    <lineage>
        <taxon>Bacteria</taxon>
        <taxon>Bacillati</taxon>
        <taxon>Bacillota</taxon>
        <taxon>Bacilli</taxon>
        <taxon>Lactobacillales</taxon>
        <taxon>Streptococcaceae</taxon>
        <taxon>Streptococcus</taxon>
    </lineage>
</organism>
<proteinExistence type="inferred from homology"/>
<gene>
    <name evidence="1" type="primary">uvrC</name>
    <name type="ordered locus">SAK_1308</name>
</gene>
<protein>
    <recommendedName>
        <fullName evidence="1">UvrABC system protein C</fullName>
        <shortName evidence="1">Protein UvrC</shortName>
    </recommendedName>
    <alternativeName>
        <fullName evidence="1">Excinuclease ABC subunit C</fullName>
    </alternativeName>
</protein>
<evidence type="ECO:0000255" key="1">
    <source>
        <dbReference type="HAMAP-Rule" id="MF_00203"/>
    </source>
</evidence>
<dbReference type="EMBL" id="CP000114">
    <property type="protein sequence ID" value="ABA44444.1"/>
    <property type="molecule type" value="Genomic_DNA"/>
</dbReference>
<dbReference type="RefSeq" id="WP_001003966.1">
    <property type="nucleotide sequence ID" value="NC_007432.1"/>
</dbReference>
<dbReference type="SMR" id="Q3K0N2"/>
<dbReference type="KEGG" id="sak:SAK_1308"/>
<dbReference type="HOGENOM" id="CLU_014841_3_2_9"/>
<dbReference type="GO" id="GO:0005737">
    <property type="term" value="C:cytoplasm"/>
    <property type="evidence" value="ECO:0007669"/>
    <property type="project" value="UniProtKB-SubCell"/>
</dbReference>
<dbReference type="GO" id="GO:0009380">
    <property type="term" value="C:excinuclease repair complex"/>
    <property type="evidence" value="ECO:0007669"/>
    <property type="project" value="InterPro"/>
</dbReference>
<dbReference type="GO" id="GO:0003677">
    <property type="term" value="F:DNA binding"/>
    <property type="evidence" value="ECO:0007669"/>
    <property type="project" value="UniProtKB-UniRule"/>
</dbReference>
<dbReference type="GO" id="GO:0009381">
    <property type="term" value="F:excinuclease ABC activity"/>
    <property type="evidence" value="ECO:0007669"/>
    <property type="project" value="UniProtKB-UniRule"/>
</dbReference>
<dbReference type="GO" id="GO:0006289">
    <property type="term" value="P:nucleotide-excision repair"/>
    <property type="evidence" value="ECO:0007669"/>
    <property type="project" value="UniProtKB-UniRule"/>
</dbReference>
<dbReference type="GO" id="GO:0009432">
    <property type="term" value="P:SOS response"/>
    <property type="evidence" value="ECO:0007669"/>
    <property type="project" value="UniProtKB-UniRule"/>
</dbReference>
<dbReference type="CDD" id="cd10434">
    <property type="entry name" value="GIY-YIG_UvrC_Cho"/>
    <property type="match status" value="1"/>
</dbReference>
<dbReference type="FunFam" id="3.30.420.340:FF:000002">
    <property type="entry name" value="UvrABC system protein C"/>
    <property type="match status" value="1"/>
</dbReference>
<dbReference type="FunFam" id="3.40.1440.10:FF:000001">
    <property type="entry name" value="UvrABC system protein C"/>
    <property type="match status" value="1"/>
</dbReference>
<dbReference type="Gene3D" id="1.10.150.20">
    <property type="entry name" value="5' to 3' exonuclease, C-terminal subdomain"/>
    <property type="match status" value="1"/>
</dbReference>
<dbReference type="Gene3D" id="3.40.1440.10">
    <property type="entry name" value="GIY-YIG endonuclease"/>
    <property type="match status" value="1"/>
</dbReference>
<dbReference type="Gene3D" id="4.10.860.10">
    <property type="entry name" value="UVR domain"/>
    <property type="match status" value="1"/>
</dbReference>
<dbReference type="Gene3D" id="3.30.420.340">
    <property type="entry name" value="UvrC, RNAse H endonuclease domain"/>
    <property type="match status" value="1"/>
</dbReference>
<dbReference type="HAMAP" id="MF_00203">
    <property type="entry name" value="UvrC"/>
    <property type="match status" value="1"/>
</dbReference>
<dbReference type="InterPro" id="IPR000305">
    <property type="entry name" value="GIY-YIG_endonuc"/>
</dbReference>
<dbReference type="InterPro" id="IPR035901">
    <property type="entry name" value="GIY-YIG_endonuc_sf"/>
</dbReference>
<dbReference type="InterPro" id="IPR047296">
    <property type="entry name" value="GIY-YIG_UvrC_Cho"/>
</dbReference>
<dbReference type="InterPro" id="IPR010994">
    <property type="entry name" value="RuvA_2-like"/>
</dbReference>
<dbReference type="InterPro" id="IPR001943">
    <property type="entry name" value="UVR_dom"/>
</dbReference>
<dbReference type="InterPro" id="IPR036876">
    <property type="entry name" value="UVR_dom_sf"/>
</dbReference>
<dbReference type="InterPro" id="IPR050066">
    <property type="entry name" value="UvrABC_protein_C"/>
</dbReference>
<dbReference type="InterPro" id="IPR004791">
    <property type="entry name" value="UvrC"/>
</dbReference>
<dbReference type="InterPro" id="IPR001162">
    <property type="entry name" value="UvrC_RNase_H_dom"/>
</dbReference>
<dbReference type="InterPro" id="IPR038476">
    <property type="entry name" value="UvrC_RNase_H_dom_sf"/>
</dbReference>
<dbReference type="NCBIfam" id="TIGR00194">
    <property type="entry name" value="uvrC"/>
    <property type="match status" value="1"/>
</dbReference>
<dbReference type="PANTHER" id="PTHR30562:SF1">
    <property type="entry name" value="UVRABC SYSTEM PROTEIN C"/>
    <property type="match status" value="1"/>
</dbReference>
<dbReference type="PANTHER" id="PTHR30562">
    <property type="entry name" value="UVRC/OXIDOREDUCTASE"/>
    <property type="match status" value="1"/>
</dbReference>
<dbReference type="Pfam" id="PF01541">
    <property type="entry name" value="GIY-YIG"/>
    <property type="match status" value="1"/>
</dbReference>
<dbReference type="Pfam" id="PF02151">
    <property type="entry name" value="UVR"/>
    <property type="match status" value="1"/>
</dbReference>
<dbReference type="Pfam" id="PF22920">
    <property type="entry name" value="UvrC_RNaseH"/>
    <property type="match status" value="1"/>
</dbReference>
<dbReference type="Pfam" id="PF08459">
    <property type="entry name" value="UvrC_RNaseH_dom"/>
    <property type="match status" value="1"/>
</dbReference>
<dbReference type="SMART" id="SM00465">
    <property type="entry name" value="GIYc"/>
    <property type="match status" value="1"/>
</dbReference>
<dbReference type="SUPFAM" id="SSF46600">
    <property type="entry name" value="C-terminal UvrC-binding domain of UvrB"/>
    <property type="match status" value="1"/>
</dbReference>
<dbReference type="SUPFAM" id="SSF82771">
    <property type="entry name" value="GIY-YIG endonuclease"/>
    <property type="match status" value="1"/>
</dbReference>
<dbReference type="SUPFAM" id="SSF47781">
    <property type="entry name" value="RuvA domain 2-like"/>
    <property type="match status" value="1"/>
</dbReference>
<dbReference type="PROSITE" id="PS50164">
    <property type="entry name" value="GIY_YIG"/>
    <property type="match status" value="1"/>
</dbReference>
<dbReference type="PROSITE" id="PS50151">
    <property type="entry name" value="UVR"/>
    <property type="match status" value="1"/>
</dbReference>
<dbReference type="PROSITE" id="PS50165">
    <property type="entry name" value="UVRC"/>
    <property type="match status" value="1"/>
</dbReference>
<accession>Q3K0N2</accession>
<keyword id="KW-0963">Cytoplasm</keyword>
<keyword id="KW-0227">DNA damage</keyword>
<keyword id="KW-0228">DNA excision</keyword>
<keyword id="KW-0234">DNA repair</keyword>
<keyword id="KW-0267">Excision nuclease</keyword>
<keyword id="KW-0742">SOS response</keyword>
<comment type="function">
    <text evidence="1">The UvrABC repair system catalyzes the recognition and processing of DNA lesions. UvrC both incises the 5' and 3' sides of the lesion. The N-terminal half is responsible for the 3' incision and the C-terminal half is responsible for the 5' incision.</text>
</comment>
<comment type="subunit">
    <text evidence="1">Interacts with UvrB in an incision complex.</text>
</comment>
<comment type="subcellular location">
    <subcellularLocation>
        <location evidence="1">Cytoplasm</location>
    </subcellularLocation>
</comment>
<comment type="similarity">
    <text evidence="1">Belongs to the UvrC family.</text>
</comment>
<reference key="1">
    <citation type="journal article" date="2005" name="Proc. Natl. Acad. Sci. U.S.A.">
        <title>Genome analysis of multiple pathogenic isolates of Streptococcus agalactiae: implications for the microbial 'pan-genome'.</title>
        <authorList>
            <person name="Tettelin H."/>
            <person name="Masignani V."/>
            <person name="Cieslewicz M.J."/>
            <person name="Donati C."/>
            <person name="Medini D."/>
            <person name="Ward N.L."/>
            <person name="Angiuoli S.V."/>
            <person name="Crabtree J."/>
            <person name="Jones A.L."/>
            <person name="Durkin A.S."/>
            <person name="DeBoy R.T."/>
            <person name="Davidsen T.M."/>
            <person name="Mora M."/>
            <person name="Scarselli M."/>
            <person name="Margarit y Ros I."/>
            <person name="Peterson J.D."/>
            <person name="Hauser C.R."/>
            <person name="Sundaram J.P."/>
            <person name="Nelson W.C."/>
            <person name="Madupu R."/>
            <person name="Brinkac L.M."/>
            <person name="Dodson R.J."/>
            <person name="Rosovitz M.J."/>
            <person name="Sullivan S.A."/>
            <person name="Daugherty S.C."/>
            <person name="Haft D.H."/>
            <person name="Selengut J."/>
            <person name="Gwinn M.L."/>
            <person name="Zhou L."/>
            <person name="Zafar N."/>
            <person name="Khouri H."/>
            <person name="Radune D."/>
            <person name="Dimitrov G."/>
            <person name="Watkins K."/>
            <person name="O'Connor K.J."/>
            <person name="Smith S."/>
            <person name="Utterback T.R."/>
            <person name="White O."/>
            <person name="Rubens C.E."/>
            <person name="Grandi G."/>
            <person name="Madoff L.C."/>
            <person name="Kasper D.L."/>
            <person name="Telford J.L."/>
            <person name="Wessels M.R."/>
            <person name="Rappuoli R."/>
            <person name="Fraser C.M."/>
        </authorList>
    </citation>
    <scope>NUCLEOTIDE SEQUENCE [LARGE SCALE GENOMIC DNA]</scope>
    <source>
        <strain>ATCC 27591 / A909 / CDC SS700</strain>
    </source>
</reference>
<sequence length="593" mass="68372">MNELIKHKLELLPDSPGCYLHKDKNGTIIYVGKAKNLKNRVRSYFHGSHNTKTELLVSEIEDFEYIVTTSNTEALLLEINLIQENMPKYNIRLKDDKSYPYIKITNERYPRLMITRQVKKSDGTYFGPYPDSGAATEIKRLLDRLFPFKKCTNPANKVCFYYHLGQCNAHTVCQTNKAYWDSLREDVKQFLNGKDNKIVNGLTEKMKSAAMTMEFERAAEYRDLIEAISLLRTKQRVIHQDMKDRDVFGYFVDKGWMCVQVFFVRNGKLIQRDVNMFPYYNEPEEDFLTYIGQFYQDTKHFLPKEVFIPQDIDAKSVETIVGCKIVKPQRGEKKQLVNLAIKNARVSLQQKFDLLEKDIRKTHGAIENLGNLLNIPKPVRIEAFDNSNIQGTSPVAAMVVFVNGKPSKKDYRKFKIKTVIGPDDYASMREVIHRRYSRVLKDGLTPPDLIVIDGGQGQVNIARDVIENQLGLAIPIAGLQKNDKHQTHELLFGDPLEVVELPRNSEEFFLLHRIQDEVHRFAITFHRQLRSKNSFSSKLDGITGLGPKRKQLLMKHFKSLPNIQKADIEDIIMCGIPRTVAESLRDSLNDPPK</sequence>